<reference key="1">
    <citation type="journal article" date="2006" name="Nat. Biotechnol.">
        <title>The genome and transcriptomes of the anti-tumor agent Clostridium novyi-NT.</title>
        <authorList>
            <person name="Bettegowda C."/>
            <person name="Huang X."/>
            <person name="Lin J."/>
            <person name="Cheong I."/>
            <person name="Kohli M."/>
            <person name="Szabo S.A."/>
            <person name="Zhang X."/>
            <person name="Diaz L.A. Jr."/>
            <person name="Velculescu V.E."/>
            <person name="Parmigiani G."/>
            <person name="Kinzler K.W."/>
            <person name="Vogelstein B."/>
            <person name="Zhou S."/>
        </authorList>
    </citation>
    <scope>NUCLEOTIDE SEQUENCE [LARGE SCALE GENOMIC DNA]</scope>
    <source>
        <strain>NT</strain>
    </source>
</reference>
<keyword id="KW-1185">Reference proteome</keyword>
<name>Y170_CLONN</name>
<gene>
    <name type="ordered locus">NT01CX_0170</name>
</gene>
<feature type="chain" id="PRO_1000012989" description="UPF0145 protein NT01CX_0170">
    <location>
        <begin position="1"/>
        <end position="103"/>
    </location>
</feature>
<evidence type="ECO:0000255" key="1">
    <source>
        <dbReference type="HAMAP-Rule" id="MF_00338"/>
    </source>
</evidence>
<sequence length="103" mass="11028">MILVNTDFISGKEIETISLVKGSTIQSKNVGKDFLSGLKTLVGGELKAYSEMMNEAREIATNRMVEEAKSLGADAVINIRYATSAIMQGAAEVIVYGTAVKIL</sequence>
<comment type="similarity">
    <text evidence="1">Belongs to the UPF0145 family.</text>
</comment>
<proteinExistence type="inferred from homology"/>
<protein>
    <recommendedName>
        <fullName evidence="1">UPF0145 protein NT01CX_0170</fullName>
    </recommendedName>
</protein>
<organism>
    <name type="scientific">Clostridium novyi (strain NT)</name>
    <dbReference type="NCBI Taxonomy" id="386415"/>
    <lineage>
        <taxon>Bacteria</taxon>
        <taxon>Bacillati</taxon>
        <taxon>Bacillota</taxon>
        <taxon>Clostridia</taxon>
        <taxon>Eubacteriales</taxon>
        <taxon>Clostridiaceae</taxon>
        <taxon>Clostridium</taxon>
    </lineage>
</organism>
<accession>A0Q222</accession>
<dbReference type="EMBL" id="CP000382">
    <property type="protein sequence ID" value="ABK62318.1"/>
    <property type="molecule type" value="Genomic_DNA"/>
</dbReference>
<dbReference type="RefSeq" id="WP_011722662.1">
    <property type="nucleotide sequence ID" value="NC_008593.1"/>
</dbReference>
<dbReference type="SMR" id="A0Q222"/>
<dbReference type="STRING" id="386415.NT01CX_0170"/>
<dbReference type="KEGG" id="cno:NT01CX_0170"/>
<dbReference type="eggNOG" id="COG0393">
    <property type="taxonomic scope" value="Bacteria"/>
</dbReference>
<dbReference type="HOGENOM" id="CLU_117144_1_2_9"/>
<dbReference type="Proteomes" id="UP000008220">
    <property type="component" value="Chromosome"/>
</dbReference>
<dbReference type="Gene3D" id="3.30.110.70">
    <property type="entry name" value="Hypothetical protein apc22750. Chain B"/>
    <property type="match status" value="1"/>
</dbReference>
<dbReference type="HAMAP" id="MF_00338">
    <property type="entry name" value="UPF0145"/>
    <property type="match status" value="1"/>
</dbReference>
<dbReference type="InterPro" id="IPR035439">
    <property type="entry name" value="UPF0145_dom_sf"/>
</dbReference>
<dbReference type="InterPro" id="IPR002765">
    <property type="entry name" value="UPF0145_YbjQ-like"/>
</dbReference>
<dbReference type="PANTHER" id="PTHR34068:SF2">
    <property type="entry name" value="UPF0145 PROTEIN SCO3412"/>
    <property type="match status" value="1"/>
</dbReference>
<dbReference type="PANTHER" id="PTHR34068">
    <property type="entry name" value="UPF0145 PROTEIN YBJQ"/>
    <property type="match status" value="1"/>
</dbReference>
<dbReference type="Pfam" id="PF01906">
    <property type="entry name" value="YbjQ_1"/>
    <property type="match status" value="1"/>
</dbReference>
<dbReference type="SUPFAM" id="SSF117782">
    <property type="entry name" value="YbjQ-like"/>
    <property type="match status" value="1"/>
</dbReference>